<reference key="1">
    <citation type="journal article" date="1990" name="J. Biol. Chem.">
        <title>Sequence analysis, tissue distribution and regulation by cell depolarization, and second messengers of bovine secretogranin II (chromogranin C) mRNA.</title>
        <authorList>
            <person name="Fischer-Colbrie R."/>
            <person name="Gutierrez J."/>
            <person name="Hsu C.M."/>
            <person name="Iacangelo A."/>
            <person name="Eiden L.E."/>
        </authorList>
    </citation>
    <scope>NUCLEOTIDE SEQUENCE [MRNA]</scope>
</reference>
<reference key="2">
    <citation type="submission" date="2005-08" db="EMBL/GenBank/DDBJ databases">
        <authorList>
            <consortium name="NIH - Mammalian Gene Collection (MGC) project"/>
        </authorList>
    </citation>
    <scope>NUCLEOTIDE SEQUENCE [LARGE SCALE MRNA]</scope>
    <source>
        <strain>Hereford</strain>
        <tissue>Hypothalamus</tissue>
    </source>
</reference>
<reference key="3">
    <citation type="journal article" date="1998" name="Neurosci. Lett.">
        <title>Formation and sequence analysis of secretoneurin, a neuropeptide derived from secretogranin II, in mammalian, bird, reptile, amphibian and fish brains.</title>
        <authorList>
            <person name="Leitner B."/>
            <person name="Schneitler C."/>
            <person name="Klocker H."/>
            <person name="Volknandt W."/>
            <person name="Zimmermann H."/>
            <person name="Winkler H."/>
            <person name="Fischer-Colbrie R."/>
        </authorList>
    </citation>
    <scope>NUCLEOTIDE SEQUENCE [MRNA] OF 181-213</scope>
</reference>
<reference key="4">
    <citation type="journal article" date="1993" name="Neuroscience">
        <title>Secretoneurin--a neuropeptide generated in brain, adrenal medulla and other endocrine tissues by proteolytic processing of secretogranin II (chromogranin C).</title>
        <authorList>
            <person name="Kirchmair R."/>
            <person name="Hogue-Angeletti R."/>
            <person name="Gutierrez J."/>
            <person name="Fischer-Colbrie R."/>
            <person name="Winkler H."/>
        </authorList>
    </citation>
    <scope>TISSUE SPECIFICITY (SECRETONEURIN)</scope>
</reference>
<evidence type="ECO:0000250" key="1">
    <source>
        <dbReference type="UniProtKB" id="P10362"/>
    </source>
</evidence>
<evidence type="ECO:0000250" key="2">
    <source>
        <dbReference type="UniProtKB" id="P13521"/>
    </source>
</evidence>
<evidence type="ECO:0000250" key="3">
    <source>
        <dbReference type="UniProtKB" id="P30945"/>
    </source>
</evidence>
<evidence type="ECO:0000250" key="4">
    <source>
        <dbReference type="UniProtKB" id="Q03517"/>
    </source>
</evidence>
<evidence type="ECO:0000255" key="5"/>
<evidence type="ECO:0000256" key="6">
    <source>
        <dbReference type="SAM" id="MobiDB-lite"/>
    </source>
</evidence>
<evidence type="ECO:0000269" key="7">
    <source>
    </source>
</evidence>
<evidence type="ECO:0000305" key="8"/>
<comment type="function">
    <text evidence="2">Neuroendocrine protein of the granin family that regulates the biogenesis of secretory granules.</text>
</comment>
<comment type="subunit">
    <text evidence="2">Interacts with Secretogranin III/SCG3.</text>
</comment>
<comment type="subcellular location">
    <subcellularLocation>
        <location>Secreted</location>
    </subcellularLocation>
    <text>Neuroendocrine and endocrine secretory granules.</text>
</comment>
<comment type="tissue specificity">
    <molecule>Secretoneurin</molecule>
    <text evidence="7">Highest levels detected in anterior pituitary followed by adrenal medulla and posterior pituitary (at protein level) (PubMed:8492910). In the brain, high levels are found in the hypothalamus, comparable to those present in posterior pituitary with two- to six-fold lower levels present in the other brain regions investigated including caudate nucleus, hippocampus, thalamus and brainstem (at protein level) (PubMed:8492910).</text>
</comment>
<comment type="miscellaneous">
    <text>Binds calcium with a low-affinity.</text>
</comment>
<comment type="similarity">
    <text evidence="8">Belongs to the chromogranin/secretogranin protein family.</text>
</comment>
<sequence>MAEAKTHWLGAVLSLIPLIFLLSEAEAASFQRNQLLQKEPDLRLENVQRFPSPEMIRALEYIEKLRQQAHKEESSPDYNPYQGVSVPLQQKENGDLPESSRDSLSEDEWMKIIAEALRQAENEPQSAPKENKPYTLNSEKNFPMDMPDDYETQQWAERKLKHMRFPPMYEENSRDNPFKRTNEIVEEQYTPQNLATLESVFQELGKLTGPNSQKRERADEEQKLYTDDEDDIYKANNIAYEDVVGGEDWNPVEEKIESQTQEEVRDSKENADKTEQINDEMKRSGQLGLQDEDLRKESKDQLSDDVSKVITYLKRLVNAAGSGRSQNGQTGERAIRLFEKPLDPQSIYQLIEISRNLQIPPEDLIDMLKTGEKPVEPEQELEIPVEPEDISEVDLDHPDLFQNKMLSKNGYPKAPGHAVAEALSEGLSVEDILNLLGMESAANPKPPYFPNQYNREKVLSRLPYGPGRSKANQLPKAVWMPDVENRQMAYENLNDKDQELGEYLARMLVKYPEIMNANPAKRVPSQGSTEDDRQDENQIEQALKEHLSQHSSQETDKLASVSKRLPVGTPKSDDTPNRPYLDEDLLVKVLEYLNQEKAEKGREHIAKRAMENM</sequence>
<accession>P20616</accession>
<accession>Q3ZBY6</accession>
<feature type="signal peptide" evidence="5">
    <location>
        <begin position="1"/>
        <end position="27"/>
    </location>
</feature>
<feature type="propeptide" id="PRO_0000005449" evidence="5">
    <location>
        <begin position="28"/>
        <end position="30"/>
    </location>
</feature>
<feature type="chain" id="PRO_0000005450" description="Secretogranin-2">
    <location>
        <begin position="31"/>
        <end position="613"/>
    </location>
</feature>
<feature type="peptide" id="PRO_0000005451" description="Secretoneurin" evidence="3">
    <location>
        <begin position="181"/>
        <end position="213"/>
    </location>
</feature>
<feature type="peptide" id="PRO_0000432734" description="Manserin" evidence="1">
    <location>
        <begin position="523"/>
        <end position="562"/>
    </location>
</feature>
<feature type="region of interest" description="Disordered" evidence="6">
    <location>
        <begin position="67"/>
        <end position="105"/>
    </location>
</feature>
<feature type="region of interest" description="Disordered" evidence="6">
    <location>
        <begin position="119"/>
        <end position="146"/>
    </location>
</feature>
<feature type="region of interest" description="Disordered" evidence="6">
    <location>
        <begin position="257"/>
        <end position="287"/>
    </location>
</feature>
<feature type="region of interest" description="Disordered" evidence="6">
    <location>
        <begin position="546"/>
        <end position="580"/>
    </location>
</feature>
<feature type="compositionally biased region" description="Basic and acidic residues" evidence="6">
    <location>
        <begin position="92"/>
        <end position="105"/>
    </location>
</feature>
<feature type="compositionally biased region" description="Basic and acidic residues" evidence="6">
    <location>
        <begin position="257"/>
        <end position="283"/>
    </location>
</feature>
<feature type="compositionally biased region" description="Basic and acidic residues" evidence="6">
    <location>
        <begin position="546"/>
        <end position="557"/>
    </location>
</feature>
<feature type="modified residue" description="Sulfotyrosine" evidence="2">
    <location>
        <position position="150"/>
    </location>
</feature>
<feature type="modified residue" description="Phosphoserine" evidence="1">
    <location>
        <position position="173"/>
    </location>
</feature>
<feature type="modified residue" description="Phosphoserine" evidence="1">
    <location>
        <position position="267"/>
    </location>
</feature>
<feature type="modified residue" description="Phosphoserine" evidence="1">
    <location>
        <position position="428"/>
    </location>
</feature>
<feature type="modified residue" description="Phosphoserine" evidence="4">
    <location>
        <position position="528"/>
    </location>
</feature>
<feature type="modified residue" description="Phosphoserine" evidence="4">
    <location>
        <position position="551"/>
    </location>
</feature>
<feature type="modified residue" description="Phosphoserine" evidence="4">
    <location>
        <position position="552"/>
    </location>
</feature>
<feature type="sequence conflict" description="In Ref. 2; AAI03035." evidence="8" ref="2">
    <original>W</original>
    <variation>S</variation>
    <location>
        <position position="109"/>
    </location>
</feature>
<feature type="sequence conflict" description="In Ref. 1; AAA30760." evidence="8" ref="1">
    <original>S</original>
    <variation>P</variation>
    <location>
        <position position="424"/>
    </location>
</feature>
<feature type="sequence conflict" description="In Ref. 2; AAI03035." evidence="8" ref="2">
    <original>E</original>
    <variation>G</variation>
    <location>
        <position position="484"/>
    </location>
</feature>
<dbReference type="EMBL" id="J05468">
    <property type="protein sequence ID" value="AAA30760.1"/>
    <property type="molecule type" value="mRNA"/>
</dbReference>
<dbReference type="EMBL" id="BC103034">
    <property type="protein sequence ID" value="AAI03035.1"/>
    <property type="molecule type" value="mRNA"/>
</dbReference>
<dbReference type="PIR" id="A35296">
    <property type="entry name" value="A35296"/>
</dbReference>
<dbReference type="RefSeq" id="NP_776601.1">
    <property type="nucleotide sequence ID" value="NM_174176.3"/>
</dbReference>
<dbReference type="SMR" id="P20616"/>
<dbReference type="FunCoup" id="P20616">
    <property type="interactions" value="297"/>
</dbReference>
<dbReference type="STRING" id="9913.ENSBTAP00000028766"/>
<dbReference type="PaxDb" id="9913-ENSBTAP00000028766"/>
<dbReference type="Ensembl" id="ENSBTAT00000028766.4">
    <property type="protein sequence ID" value="ENSBTAP00000028766.2"/>
    <property type="gene ID" value="ENSBTAG00000021588.4"/>
</dbReference>
<dbReference type="GeneID" id="281477"/>
<dbReference type="KEGG" id="bta:281477"/>
<dbReference type="CTD" id="7857"/>
<dbReference type="VEuPathDB" id="HostDB:ENSBTAG00000021588"/>
<dbReference type="VGNC" id="VGNC:34332">
    <property type="gene designation" value="SCG2"/>
</dbReference>
<dbReference type="eggNOG" id="ENOG502QV5W">
    <property type="taxonomic scope" value="Eukaryota"/>
</dbReference>
<dbReference type="GeneTree" id="ENSGT00390000010895"/>
<dbReference type="HOGENOM" id="CLU_031294_0_0_1"/>
<dbReference type="InParanoid" id="P20616"/>
<dbReference type="OMA" id="RNAAYDD"/>
<dbReference type="OrthoDB" id="8894600at2759"/>
<dbReference type="TreeFam" id="TF334018"/>
<dbReference type="Reactome" id="R-BTA-381426">
    <property type="pathway name" value="Regulation of Insulin-like Growth Factor (IGF) transport and uptake by Insulin-like Growth Factor Binding Proteins (IGFBPs)"/>
</dbReference>
<dbReference type="Reactome" id="R-BTA-8957275">
    <property type="pathway name" value="Post-translational protein phosphorylation"/>
</dbReference>
<dbReference type="Proteomes" id="UP000009136">
    <property type="component" value="Chromosome 2"/>
</dbReference>
<dbReference type="Bgee" id="ENSBTAG00000021588">
    <property type="expression patterns" value="Expressed in adenohypophysis and 79 other cell types or tissues"/>
</dbReference>
<dbReference type="GO" id="GO:0005615">
    <property type="term" value="C:extracellular space"/>
    <property type="evidence" value="ECO:0000250"/>
    <property type="project" value="HGNC-UCL"/>
</dbReference>
<dbReference type="GO" id="GO:0030141">
    <property type="term" value="C:secretory granule"/>
    <property type="evidence" value="ECO:0000318"/>
    <property type="project" value="GO_Central"/>
</dbReference>
<dbReference type="GO" id="GO:0042056">
    <property type="term" value="F:chemoattractant activity"/>
    <property type="evidence" value="ECO:0000250"/>
    <property type="project" value="HGNC-UCL"/>
</dbReference>
<dbReference type="GO" id="GO:0005125">
    <property type="term" value="F:cytokine activity"/>
    <property type="evidence" value="ECO:0000250"/>
    <property type="project" value="HGNC-UCL"/>
</dbReference>
<dbReference type="GO" id="GO:0001525">
    <property type="term" value="P:angiogenesis"/>
    <property type="evidence" value="ECO:0000250"/>
    <property type="project" value="HGNC-UCL"/>
</dbReference>
<dbReference type="GO" id="GO:0048245">
    <property type="term" value="P:eosinophil chemotaxis"/>
    <property type="evidence" value="ECO:0000250"/>
    <property type="project" value="HGNC-UCL"/>
</dbReference>
<dbReference type="GO" id="GO:0050930">
    <property type="term" value="P:induction of positive chemotaxis"/>
    <property type="evidence" value="ECO:0000250"/>
    <property type="project" value="HGNC-UCL"/>
</dbReference>
<dbReference type="GO" id="GO:0035556">
    <property type="term" value="P:intracellular signal transduction"/>
    <property type="evidence" value="ECO:0000250"/>
    <property type="project" value="HGNC-UCL"/>
</dbReference>
<dbReference type="GO" id="GO:0000165">
    <property type="term" value="P:MAPK cascade"/>
    <property type="evidence" value="ECO:0000250"/>
    <property type="project" value="HGNC-UCL"/>
</dbReference>
<dbReference type="GO" id="GO:2000352">
    <property type="term" value="P:negative regulation of endothelial cell apoptotic process"/>
    <property type="evidence" value="ECO:0000250"/>
    <property type="project" value="HGNC"/>
</dbReference>
<dbReference type="GO" id="GO:2001237">
    <property type="term" value="P:negative regulation of extrinsic apoptotic signaling pathway"/>
    <property type="evidence" value="ECO:0007669"/>
    <property type="project" value="Ensembl"/>
</dbReference>
<dbReference type="GO" id="GO:0050918">
    <property type="term" value="P:positive chemotaxis"/>
    <property type="evidence" value="ECO:0000250"/>
    <property type="project" value="HGNC"/>
</dbReference>
<dbReference type="GO" id="GO:0001938">
    <property type="term" value="P:positive regulation of endothelial cell proliferation"/>
    <property type="evidence" value="ECO:0000250"/>
    <property type="project" value="HGNC-UCL"/>
</dbReference>
<dbReference type="InterPro" id="IPR018054">
    <property type="entry name" value="Chromogranin_CS"/>
</dbReference>
<dbReference type="InterPro" id="IPR001990">
    <property type="entry name" value="Granin"/>
</dbReference>
<dbReference type="InterPro" id="IPR038858">
    <property type="entry name" value="ScgII"/>
</dbReference>
<dbReference type="PANTHER" id="PTHR15119">
    <property type="entry name" value="SECRETOGRANIN II"/>
    <property type="match status" value="1"/>
</dbReference>
<dbReference type="PANTHER" id="PTHR15119:SF0">
    <property type="entry name" value="SECRETOGRANIN-2"/>
    <property type="match status" value="1"/>
</dbReference>
<dbReference type="Pfam" id="PF01271">
    <property type="entry name" value="Granin"/>
    <property type="match status" value="1"/>
</dbReference>
<dbReference type="PROSITE" id="PS00422">
    <property type="entry name" value="GRANINS_1"/>
    <property type="match status" value="1"/>
</dbReference>
<keyword id="KW-0106">Calcium</keyword>
<keyword id="KW-0165">Cleavage on pair of basic residues</keyword>
<keyword id="KW-0597">Phosphoprotein</keyword>
<keyword id="KW-1185">Reference proteome</keyword>
<keyword id="KW-0964">Secreted</keyword>
<keyword id="KW-0732">Signal</keyword>
<keyword id="KW-0765">Sulfation</keyword>
<organism>
    <name type="scientific">Bos taurus</name>
    <name type="common">Bovine</name>
    <dbReference type="NCBI Taxonomy" id="9913"/>
    <lineage>
        <taxon>Eukaryota</taxon>
        <taxon>Metazoa</taxon>
        <taxon>Chordata</taxon>
        <taxon>Craniata</taxon>
        <taxon>Vertebrata</taxon>
        <taxon>Euteleostomi</taxon>
        <taxon>Mammalia</taxon>
        <taxon>Eutheria</taxon>
        <taxon>Laurasiatheria</taxon>
        <taxon>Artiodactyla</taxon>
        <taxon>Ruminantia</taxon>
        <taxon>Pecora</taxon>
        <taxon>Bovidae</taxon>
        <taxon>Bovinae</taxon>
        <taxon>Bos</taxon>
    </lineage>
</organism>
<protein>
    <recommendedName>
        <fullName>Secretogranin-2</fullName>
    </recommendedName>
    <alternativeName>
        <fullName>Chromogranin-C</fullName>
    </alternativeName>
    <alternativeName>
        <fullName>Secretogranin II</fullName>
        <shortName>SgII</shortName>
    </alternativeName>
    <component>
        <recommendedName>
            <fullName>Secretoneurin</fullName>
            <shortName>SN</shortName>
        </recommendedName>
    </component>
    <component>
        <recommendedName>
            <fullName>Manserin</fullName>
        </recommendedName>
    </component>
</protein>
<proteinExistence type="evidence at protein level"/>
<gene>
    <name type="primary">SCG2</name>
    <name type="synonym">CHGC</name>
</gene>
<name>SCG2_BOVIN</name>